<keyword id="KW-0028">Amino-acid biosynthesis</keyword>
<keyword id="KW-0963">Cytoplasm</keyword>
<keyword id="KW-0413">Isomerase</keyword>
<keyword id="KW-0486">Methionine biosynthesis</keyword>
<keyword id="KW-0539">Nucleus</keyword>
<keyword id="KW-1185">Reference proteome</keyword>
<accession>B4LWZ8</accession>
<name>MTNA_DROVI</name>
<proteinExistence type="inferred from homology"/>
<evidence type="ECO:0000255" key="1">
    <source>
        <dbReference type="HAMAP-Rule" id="MF_03119"/>
    </source>
</evidence>
<gene>
    <name type="ORF">GJ22917</name>
</gene>
<reference key="1">
    <citation type="journal article" date="2007" name="Nature">
        <title>Evolution of genes and genomes on the Drosophila phylogeny.</title>
        <authorList>
            <consortium name="Drosophila 12 genomes consortium"/>
        </authorList>
    </citation>
    <scope>NUCLEOTIDE SEQUENCE [LARGE SCALE GENOMIC DNA]</scope>
    <source>
        <strain>Tucson 15010-1051.87</strain>
    </source>
</reference>
<feature type="chain" id="PRO_0000401984" description="Methylthioribose-1-phosphate isomerase">
    <location>
        <begin position="1"/>
        <end position="362"/>
    </location>
</feature>
<feature type="active site" description="Proton donor" evidence="1">
    <location>
        <position position="252"/>
    </location>
</feature>
<feature type="site" description="Transition state stabilizer" evidence="1">
    <location>
        <position position="172"/>
    </location>
</feature>
<organism>
    <name type="scientific">Drosophila virilis</name>
    <name type="common">Fruit fly</name>
    <dbReference type="NCBI Taxonomy" id="7244"/>
    <lineage>
        <taxon>Eukaryota</taxon>
        <taxon>Metazoa</taxon>
        <taxon>Ecdysozoa</taxon>
        <taxon>Arthropoda</taxon>
        <taxon>Hexapoda</taxon>
        <taxon>Insecta</taxon>
        <taxon>Pterygota</taxon>
        <taxon>Neoptera</taxon>
        <taxon>Endopterygota</taxon>
        <taxon>Diptera</taxon>
        <taxon>Brachycera</taxon>
        <taxon>Muscomorpha</taxon>
        <taxon>Ephydroidea</taxon>
        <taxon>Drosophilidae</taxon>
        <taxon>Drosophila</taxon>
    </lineage>
</organism>
<comment type="function">
    <text evidence="1">Catalyzes the interconversion of methylthioribose-1-phosphate (MTR-1-P) into methylthioribulose-1-phosphate (MTRu-1-P).</text>
</comment>
<comment type="catalytic activity">
    <reaction evidence="1">
        <text>5-(methylsulfanyl)-alpha-D-ribose 1-phosphate = 5-(methylsulfanyl)-D-ribulose 1-phosphate</text>
        <dbReference type="Rhea" id="RHEA:19989"/>
        <dbReference type="ChEBI" id="CHEBI:58533"/>
        <dbReference type="ChEBI" id="CHEBI:58548"/>
        <dbReference type="EC" id="5.3.1.23"/>
    </reaction>
</comment>
<comment type="pathway">
    <text evidence="1">Amino-acid biosynthesis; L-methionine biosynthesis via salvage pathway; L-methionine from S-methyl-5-thio-alpha-D-ribose 1-phosphate: step 1/6.</text>
</comment>
<comment type="subcellular location">
    <subcellularLocation>
        <location evidence="1">Cytoplasm</location>
    </subcellularLocation>
    <subcellularLocation>
        <location evidence="1">Nucleus</location>
    </subcellularLocation>
</comment>
<comment type="similarity">
    <text evidence="1">Belongs to the eIF-2B alpha/beta/delta subunits family. MtnA subfamily.</text>
</comment>
<protein>
    <recommendedName>
        <fullName evidence="1">Methylthioribose-1-phosphate isomerase</fullName>
        <shortName evidence="1">M1Pi</shortName>
        <shortName evidence="1">MTR-1-P isomerase</shortName>
        <ecNumber evidence="1">5.3.1.23</ecNumber>
    </recommendedName>
    <alternativeName>
        <fullName evidence="1">S-methyl-5-thioribose-1-phosphate isomerase</fullName>
    </alternativeName>
    <alternativeName>
        <fullName evidence="1">Translation initiation factor eIF-2B subunit alpha/beta/delta-like protein</fullName>
    </alternativeName>
</protein>
<dbReference type="EC" id="5.3.1.23" evidence="1"/>
<dbReference type="EMBL" id="CH940650">
    <property type="protein sequence ID" value="EDW67745.1"/>
    <property type="molecule type" value="Genomic_DNA"/>
</dbReference>
<dbReference type="RefSeq" id="XP_015026976.1">
    <property type="nucleotide sequence ID" value="XM_015171490.1"/>
</dbReference>
<dbReference type="RefSeq" id="XP_015026977.1">
    <property type="nucleotide sequence ID" value="XM_015171491.1"/>
</dbReference>
<dbReference type="SMR" id="B4LWZ8"/>
<dbReference type="FunCoup" id="B4LWZ8">
    <property type="interactions" value="1588"/>
</dbReference>
<dbReference type="STRING" id="7244.B4LWZ8"/>
<dbReference type="EnsemblMetazoa" id="FBtr0238842">
    <property type="protein sequence ID" value="FBpp0237334"/>
    <property type="gene ID" value="FBgn0210020"/>
</dbReference>
<dbReference type="EnsemblMetazoa" id="FBtr0435703">
    <property type="protein sequence ID" value="FBpp0392651"/>
    <property type="gene ID" value="FBgn0210020"/>
</dbReference>
<dbReference type="EnsemblMetazoa" id="FBtr0438845">
    <property type="protein sequence ID" value="FBpp0395560"/>
    <property type="gene ID" value="FBgn0210020"/>
</dbReference>
<dbReference type="EnsemblMetazoa" id="FBtr0442876">
    <property type="protein sequence ID" value="FBpp0399321"/>
    <property type="gene ID" value="FBgn0210020"/>
</dbReference>
<dbReference type="EnsemblMetazoa" id="XM_002054189.3">
    <property type="protein sequence ID" value="XP_002054225.1"/>
    <property type="gene ID" value="LOC6631059"/>
</dbReference>
<dbReference type="EnsemblMetazoa" id="XM_015171489.2">
    <property type="protein sequence ID" value="XP_015026975.1"/>
    <property type="gene ID" value="LOC6631059"/>
</dbReference>
<dbReference type="EnsemblMetazoa" id="XM_015171491.2">
    <property type="protein sequence ID" value="XP_015026977.1"/>
    <property type="gene ID" value="LOC6631059"/>
</dbReference>
<dbReference type="GeneID" id="6631059"/>
<dbReference type="KEGG" id="dvi:6631059"/>
<dbReference type="eggNOG" id="KOG1468">
    <property type="taxonomic scope" value="Eukaryota"/>
</dbReference>
<dbReference type="HOGENOM" id="CLU_016218_1_3_1"/>
<dbReference type="InParanoid" id="B4LWZ8"/>
<dbReference type="OMA" id="CETRPLN"/>
<dbReference type="OrthoDB" id="2461at2759"/>
<dbReference type="PhylomeDB" id="B4LWZ8"/>
<dbReference type="UniPathway" id="UPA00904">
    <property type="reaction ID" value="UER00874"/>
</dbReference>
<dbReference type="Proteomes" id="UP000008792">
    <property type="component" value="Unassembled WGS sequence"/>
</dbReference>
<dbReference type="GO" id="GO:0005737">
    <property type="term" value="C:cytoplasm"/>
    <property type="evidence" value="ECO:0007669"/>
    <property type="project" value="UniProtKB-SubCell"/>
</dbReference>
<dbReference type="GO" id="GO:0005634">
    <property type="term" value="C:nucleus"/>
    <property type="evidence" value="ECO:0007669"/>
    <property type="project" value="UniProtKB-SubCell"/>
</dbReference>
<dbReference type="GO" id="GO:0046523">
    <property type="term" value="F:S-methyl-5-thioribose-1-phosphate isomerase activity"/>
    <property type="evidence" value="ECO:0007669"/>
    <property type="project" value="UniProtKB-UniRule"/>
</dbReference>
<dbReference type="GO" id="GO:0019509">
    <property type="term" value="P:L-methionine salvage from methylthioadenosine"/>
    <property type="evidence" value="ECO:0007669"/>
    <property type="project" value="UniProtKB-UniRule"/>
</dbReference>
<dbReference type="FunFam" id="1.20.120.420:FF:000010">
    <property type="entry name" value="Methylthioribose-1-phosphate isomerase"/>
    <property type="match status" value="1"/>
</dbReference>
<dbReference type="FunFam" id="3.40.50.10470:FF:000003">
    <property type="entry name" value="Methylthioribose-1-phosphate isomerase"/>
    <property type="match status" value="1"/>
</dbReference>
<dbReference type="Gene3D" id="1.20.120.420">
    <property type="entry name" value="translation initiation factor eif-2b, domain 1"/>
    <property type="match status" value="1"/>
</dbReference>
<dbReference type="Gene3D" id="3.40.50.10470">
    <property type="entry name" value="Translation initiation factor eif-2b, domain 2"/>
    <property type="match status" value="1"/>
</dbReference>
<dbReference type="HAMAP" id="MF_01678">
    <property type="entry name" value="Salvage_MtnA"/>
    <property type="match status" value="1"/>
</dbReference>
<dbReference type="InterPro" id="IPR000649">
    <property type="entry name" value="IF-2B-related"/>
</dbReference>
<dbReference type="InterPro" id="IPR005251">
    <property type="entry name" value="IF-M1Pi"/>
</dbReference>
<dbReference type="InterPro" id="IPR042529">
    <property type="entry name" value="IF_2B-like_C"/>
</dbReference>
<dbReference type="InterPro" id="IPR011559">
    <property type="entry name" value="Initiation_fac_2B_a/b/d"/>
</dbReference>
<dbReference type="InterPro" id="IPR027363">
    <property type="entry name" value="M1Pi_N"/>
</dbReference>
<dbReference type="InterPro" id="IPR037171">
    <property type="entry name" value="NagB/RpiA_transferase-like"/>
</dbReference>
<dbReference type="NCBIfam" id="TIGR00524">
    <property type="entry name" value="eIF-2B_rel"/>
    <property type="match status" value="1"/>
</dbReference>
<dbReference type="NCBIfam" id="NF004326">
    <property type="entry name" value="PRK05720.1"/>
    <property type="match status" value="1"/>
</dbReference>
<dbReference type="NCBIfam" id="TIGR00512">
    <property type="entry name" value="salvage_mtnA"/>
    <property type="match status" value="1"/>
</dbReference>
<dbReference type="PANTHER" id="PTHR43475">
    <property type="entry name" value="METHYLTHIORIBOSE-1-PHOSPHATE ISOMERASE"/>
    <property type="match status" value="1"/>
</dbReference>
<dbReference type="PANTHER" id="PTHR43475:SF1">
    <property type="entry name" value="METHYLTHIORIBOSE-1-PHOSPHATE ISOMERASE"/>
    <property type="match status" value="1"/>
</dbReference>
<dbReference type="Pfam" id="PF01008">
    <property type="entry name" value="IF-2B"/>
    <property type="match status" value="1"/>
</dbReference>
<dbReference type="SUPFAM" id="SSF100950">
    <property type="entry name" value="NagB/RpiA/CoA transferase-like"/>
    <property type="match status" value="1"/>
</dbReference>
<sequence>MSLQSIKYQRGSLEILDQLLLPVVSKYLTVRGVEDGWKVINKMQVRGAPAIAIVGCLSLAVEIYPEEFGSKKSLRQEIEGKLNYLVSARPTAVNMKISADELITLANELTKDDNVTVEDMKQRFLNATEAMLEKDIADNRAIGANGAKAILEHVAESASAAAAGPVRVLTHCNTGSLATAGYGTALGVVRHLSELGKLEHVYCTETRPYNQGARLTAYELVHEKLPATLVLDSMVAALLRVKNVAAVVVGADRVAANGDTANKIGTYQIAVVAKHHGVPFYVAAPLTSVDLQIPSGDHIIIEVRPDREMTHVGEHRIAAPGINCWNPAFDVTPASLVTGIITEHGVFKPSALKAEITKLLDL</sequence>